<dbReference type="EC" id="6.1.1.16" evidence="1"/>
<dbReference type="EMBL" id="CP001010">
    <property type="protein sequence ID" value="ACB44165.1"/>
    <property type="molecule type" value="Genomic_DNA"/>
</dbReference>
<dbReference type="SMR" id="B1XUY8"/>
<dbReference type="STRING" id="452638.Pnec_0980"/>
<dbReference type="KEGG" id="pne:Pnec_0980"/>
<dbReference type="eggNOG" id="COG0215">
    <property type="taxonomic scope" value="Bacteria"/>
</dbReference>
<dbReference type="HOGENOM" id="CLU_013528_0_1_4"/>
<dbReference type="OrthoDB" id="9815130at2"/>
<dbReference type="GO" id="GO:0005829">
    <property type="term" value="C:cytosol"/>
    <property type="evidence" value="ECO:0007669"/>
    <property type="project" value="TreeGrafter"/>
</dbReference>
<dbReference type="GO" id="GO:0005524">
    <property type="term" value="F:ATP binding"/>
    <property type="evidence" value="ECO:0007669"/>
    <property type="project" value="UniProtKB-UniRule"/>
</dbReference>
<dbReference type="GO" id="GO:0004817">
    <property type="term" value="F:cysteine-tRNA ligase activity"/>
    <property type="evidence" value="ECO:0007669"/>
    <property type="project" value="UniProtKB-UniRule"/>
</dbReference>
<dbReference type="GO" id="GO:0008270">
    <property type="term" value="F:zinc ion binding"/>
    <property type="evidence" value="ECO:0007669"/>
    <property type="project" value="UniProtKB-UniRule"/>
</dbReference>
<dbReference type="GO" id="GO:0006423">
    <property type="term" value="P:cysteinyl-tRNA aminoacylation"/>
    <property type="evidence" value="ECO:0007669"/>
    <property type="project" value="UniProtKB-UniRule"/>
</dbReference>
<dbReference type="CDD" id="cd07963">
    <property type="entry name" value="Anticodon_Ia_Cys"/>
    <property type="match status" value="1"/>
</dbReference>
<dbReference type="CDD" id="cd00672">
    <property type="entry name" value="CysRS_core"/>
    <property type="match status" value="1"/>
</dbReference>
<dbReference type="FunFam" id="3.40.50.620:FF:000009">
    <property type="entry name" value="Cysteine--tRNA ligase"/>
    <property type="match status" value="1"/>
</dbReference>
<dbReference type="Gene3D" id="1.20.120.1910">
    <property type="entry name" value="Cysteine-tRNA ligase, C-terminal anti-codon recognition domain"/>
    <property type="match status" value="1"/>
</dbReference>
<dbReference type="Gene3D" id="3.40.50.620">
    <property type="entry name" value="HUPs"/>
    <property type="match status" value="1"/>
</dbReference>
<dbReference type="HAMAP" id="MF_00041">
    <property type="entry name" value="Cys_tRNA_synth"/>
    <property type="match status" value="1"/>
</dbReference>
<dbReference type="InterPro" id="IPR015803">
    <property type="entry name" value="Cys-tRNA-ligase"/>
</dbReference>
<dbReference type="InterPro" id="IPR015273">
    <property type="entry name" value="Cys-tRNA-synt_Ia_DALR"/>
</dbReference>
<dbReference type="InterPro" id="IPR024909">
    <property type="entry name" value="Cys-tRNA/MSH_ligase"/>
</dbReference>
<dbReference type="InterPro" id="IPR014729">
    <property type="entry name" value="Rossmann-like_a/b/a_fold"/>
</dbReference>
<dbReference type="InterPro" id="IPR032678">
    <property type="entry name" value="tRNA-synt_1_cat_dom"/>
</dbReference>
<dbReference type="InterPro" id="IPR009080">
    <property type="entry name" value="tRNAsynth_Ia_anticodon-bd"/>
</dbReference>
<dbReference type="NCBIfam" id="TIGR00435">
    <property type="entry name" value="cysS"/>
    <property type="match status" value="1"/>
</dbReference>
<dbReference type="PANTHER" id="PTHR10890:SF3">
    <property type="entry name" value="CYSTEINE--TRNA LIGASE, CYTOPLASMIC"/>
    <property type="match status" value="1"/>
</dbReference>
<dbReference type="PANTHER" id="PTHR10890">
    <property type="entry name" value="CYSTEINYL-TRNA SYNTHETASE"/>
    <property type="match status" value="1"/>
</dbReference>
<dbReference type="Pfam" id="PF09190">
    <property type="entry name" value="DALR_2"/>
    <property type="match status" value="1"/>
</dbReference>
<dbReference type="Pfam" id="PF01406">
    <property type="entry name" value="tRNA-synt_1e"/>
    <property type="match status" value="1"/>
</dbReference>
<dbReference type="PRINTS" id="PR00983">
    <property type="entry name" value="TRNASYNTHCYS"/>
</dbReference>
<dbReference type="SMART" id="SM00840">
    <property type="entry name" value="DALR_2"/>
    <property type="match status" value="1"/>
</dbReference>
<dbReference type="SUPFAM" id="SSF47323">
    <property type="entry name" value="Anticodon-binding domain of a subclass of class I aminoacyl-tRNA synthetases"/>
    <property type="match status" value="1"/>
</dbReference>
<dbReference type="SUPFAM" id="SSF52374">
    <property type="entry name" value="Nucleotidylyl transferase"/>
    <property type="match status" value="1"/>
</dbReference>
<feature type="chain" id="PRO_1000090857" description="Cysteine--tRNA ligase">
    <location>
        <begin position="1"/>
        <end position="473"/>
    </location>
</feature>
<feature type="short sequence motif" description="'HIGH' region">
    <location>
        <begin position="30"/>
        <end position="40"/>
    </location>
</feature>
<feature type="short sequence motif" description="'KMSKS' region">
    <location>
        <begin position="277"/>
        <end position="281"/>
    </location>
</feature>
<feature type="binding site" evidence="1">
    <location>
        <position position="28"/>
    </location>
    <ligand>
        <name>Zn(2+)</name>
        <dbReference type="ChEBI" id="CHEBI:29105"/>
    </ligand>
</feature>
<feature type="binding site" evidence="1">
    <location>
        <position position="212"/>
    </location>
    <ligand>
        <name>Zn(2+)</name>
        <dbReference type="ChEBI" id="CHEBI:29105"/>
    </ligand>
</feature>
<feature type="binding site" evidence="1">
    <location>
        <position position="237"/>
    </location>
    <ligand>
        <name>Zn(2+)</name>
        <dbReference type="ChEBI" id="CHEBI:29105"/>
    </ligand>
</feature>
<feature type="binding site" evidence="1">
    <location>
        <position position="241"/>
    </location>
    <ligand>
        <name>Zn(2+)</name>
        <dbReference type="ChEBI" id="CHEBI:29105"/>
    </ligand>
</feature>
<feature type="binding site" evidence="1">
    <location>
        <position position="280"/>
    </location>
    <ligand>
        <name>ATP</name>
        <dbReference type="ChEBI" id="CHEBI:30616"/>
    </ligand>
</feature>
<evidence type="ECO:0000255" key="1">
    <source>
        <dbReference type="HAMAP-Rule" id="MF_00041"/>
    </source>
</evidence>
<comment type="catalytic activity">
    <reaction evidence="1">
        <text>tRNA(Cys) + L-cysteine + ATP = L-cysteinyl-tRNA(Cys) + AMP + diphosphate</text>
        <dbReference type="Rhea" id="RHEA:17773"/>
        <dbReference type="Rhea" id="RHEA-COMP:9661"/>
        <dbReference type="Rhea" id="RHEA-COMP:9679"/>
        <dbReference type="ChEBI" id="CHEBI:30616"/>
        <dbReference type="ChEBI" id="CHEBI:33019"/>
        <dbReference type="ChEBI" id="CHEBI:35235"/>
        <dbReference type="ChEBI" id="CHEBI:78442"/>
        <dbReference type="ChEBI" id="CHEBI:78517"/>
        <dbReference type="ChEBI" id="CHEBI:456215"/>
        <dbReference type="EC" id="6.1.1.16"/>
    </reaction>
</comment>
<comment type="cofactor">
    <cofactor evidence="1">
        <name>Zn(2+)</name>
        <dbReference type="ChEBI" id="CHEBI:29105"/>
    </cofactor>
    <text evidence="1">Binds 1 zinc ion per subunit.</text>
</comment>
<comment type="subunit">
    <text evidence="1">Monomer.</text>
</comment>
<comment type="subcellular location">
    <subcellularLocation>
        <location evidence="1">Cytoplasm</location>
    </subcellularLocation>
</comment>
<comment type="similarity">
    <text evidence="1">Belongs to the class-I aminoacyl-tRNA synthetase family.</text>
</comment>
<keyword id="KW-0030">Aminoacyl-tRNA synthetase</keyword>
<keyword id="KW-0067">ATP-binding</keyword>
<keyword id="KW-0963">Cytoplasm</keyword>
<keyword id="KW-0436">Ligase</keyword>
<keyword id="KW-0479">Metal-binding</keyword>
<keyword id="KW-0547">Nucleotide-binding</keyword>
<keyword id="KW-0648">Protein biosynthesis</keyword>
<keyword id="KW-0862">Zinc</keyword>
<name>SYC_POLNS</name>
<accession>B1XUY8</accession>
<reference key="1">
    <citation type="journal article" date="2013" name="Proc. Natl. Acad. Sci. U.S.A.">
        <title>Polynucleobacter necessarius, a model for genome reduction in both free-living and symbiotic bacteria.</title>
        <authorList>
            <person name="Boscaro V."/>
            <person name="Felletti M."/>
            <person name="Vannini C."/>
            <person name="Ackerman M.S."/>
            <person name="Chain P.S."/>
            <person name="Malfatti S."/>
            <person name="Vergez L.M."/>
            <person name="Shin M."/>
            <person name="Doak T.G."/>
            <person name="Lynch M."/>
            <person name="Petroni G."/>
        </authorList>
    </citation>
    <scope>NUCLEOTIDE SEQUENCE [LARGE SCALE GENOMIC DNA]</scope>
    <source>
        <strain>STIR1</strain>
    </source>
</reference>
<protein>
    <recommendedName>
        <fullName evidence="1">Cysteine--tRNA ligase</fullName>
        <ecNumber evidence="1">6.1.1.16</ecNumber>
    </recommendedName>
    <alternativeName>
        <fullName evidence="1">Cysteinyl-tRNA synthetase</fullName>
        <shortName evidence="1">CysRS</shortName>
    </alternativeName>
</protein>
<gene>
    <name evidence="1" type="primary">cysS</name>
    <name type="ordered locus">Pnec_0980</name>
</gene>
<sequence>MLQIYNTLSRSKQVFKPIVPGKVKMYVCGMTVYDFCHIGHARVMIVFDMVVRWLRASGYEVLYVRNITDIDDKIINRAIENGEPISALTNRFVDAMHADSDELGLMHPDQEPRATDYIAQMQGMIGKLIENELAYQANDGDVNFAVRLLPRYGQLSGKTLDELNAGERVAVGDGKRDPLDFVLWKSAKPEEPADTRWKSPWGEGRPGWHIECSAMSCDLLGEHFDIHGGGADLQFPHHENEIAQSEGALYGKDRKVDDAPFVNYWMHNGHIRVNEEKMSKSLGNFFLIRDVLKSFDPEVIRFFMLKTHYRSPINYSDAQLEEARSGLVRLYTALAQGSKAQTISLGSSNPWAKRFADAMNDDFNTPEAIAVLFDIVSEVNRAQGEEKQVLANILKALGASLNFLQRDPTVFLQSSAKDQAGLSPEQIEEQIAARVAAKQAKDFAKADAIRKALLEQGIVLEDKPGGLTGWRRA</sequence>
<proteinExistence type="inferred from homology"/>
<organism>
    <name type="scientific">Polynucleobacter necessarius subsp. necessarius (strain STIR1)</name>
    <dbReference type="NCBI Taxonomy" id="452638"/>
    <lineage>
        <taxon>Bacteria</taxon>
        <taxon>Pseudomonadati</taxon>
        <taxon>Pseudomonadota</taxon>
        <taxon>Betaproteobacteria</taxon>
        <taxon>Burkholderiales</taxon>
        <taxon>Burkholderiaceae</taxon>
        <taxon>Polynucleobacter</taxon>
    </lineage>
</organism>